<geneLocation type="chloroplast"/>
<sequence>MDEFHRYGKEDSSWQQCFLYPLFFQEDLYAISHDHYLDGSSSSEPMEHLSSNDQFSFLTVKRLIGQIRQQNHSIVLFVNCDPNPLVDRKKSSYSESVLEGLTLVLEVPFSIRSKYSVEGMNEWKSFRSIHSIFPFLEDKFPHSNYVSDTRIPYSIHPEILVRTFRRWIGDAPSLHPLRSILYEYRNSSESLQRSIIVVPKVNTRFFLFLWNNYVYECESILVSLLKRSSHSRSLSHGSFPQRTHFHRKIKNIFLFSRRNSFQSIWSLKDPNIHYVRYGERSIIAIKGTHLLVKKYRYYLPIFRQCYFHLWNEPYRVCFHQLSKNCSSSLGYFLRVRMKPLLVKTKMLDELFIADLITDEFDPIVPIVPIIGLLSREKFCDISGRPISKLSWTSLTDDDILDRFDRIWRNIFHYYSGSFGRDGLYRIKYILSLSCAKTLACKHKSTIRVVRKELGPELFKKSFSKERELDSPPFSSKAAARSQRERIWHSDIPQINPLAHSWQKIQDLKIENLFDQ</sequence>
<comment type="function">
    <text evidence="1">Usually encoded in the trnK tRNA gene intron. Probably assists in splicing its own and other chloroplast group II introns.</text>
</comment>
<comment type="subcellular location">
    <subcellularLocation>
        <location>Plastid</location>
        <location>Chloroplast</location>
    </subcellularLocation>
</comment>
<comment type="similarity">
    <text evidence="1">Belongs to the intron maturase 2 family. MatK subfamily.</text>
</comment>
<organism>
    <name type="scientific">Picea mariana</name>
    <name type="common">Black spruce</name>
    <name type="synonym">Abies mariana</name>
    <dbReference type="NCBI Taxonomy" id="3335"/>
    <lineage>
        <taxon>Eukaryota</taxon>
        <taxon>Viridiplantae</taxon>
        <taxon>Streptophyta</taxon>
        <taxon>Embryophyta</taxon>
        <taxon>Tracheophyta</taxon>
        <taxon>Spermatophyta</taxon>
        <taxon>Pinopsida</taxon>
        <taxon>Pinidae</taxon>
        <taxon>Conifers I</taxon>
        <taxon>Pinales</taxon>
        <taxon>Pinaceae</taxon>
        <taxon>Picea</taxon>
    </lineage>
</organism>
<keyword id="KW-0150">Chloroplast</keyword>
<keyword id="KW-0507">mRNA processing</keyword>
<keyword id="KW-0934">Plastid</keyword>
<keyword id="KW-0694">RNA-binding</keyword>
<keyword id="KW-0819">tRNA processing</keyword>
<name>MATK_PICMA</name>
<proteinExistence type="inferred from homology"/>
<feature type="chain" id="PRO_0000143597" description="Maturase K">
    <location>
        <begin position="1"/>
        <end position="515"/>
    </location>
</feature>
<dbReference type="EMBL" id="AF133919">
    <property type="protein sequence ID" value="AAD21645.1"/>
    <property type="molecule type" value="Genomic_DNA"/>
</dbReference>
<dbReference type="EMBL" id="AF133920">
    <property type="protein sequence ID" value="AAD21646.1"/>
    <property type="molecule type" value="Genomic_DNA"/>
</dbReference>
<dbReference type="EMBL" id="AF133921">
    <property type="protein sequence ID" value="AAD21647.1"/>
    <property type="molecule type" value="Genomic_DNA"/>
</dbReference>
<dbReference type="EMBL" id="AF133922">
    <property type="protein sequence ID" value="AAD21648.1"/>
    <property type="molecule type" value="Genomic_DNA"/>
</dbReference>
<dbReference type="RefSeq" id="YP_009913434.1">
    <property type="nucleotide sequence ID" value="NC_050064.1"/>
</dbReference>
<dbReference type="GeneID" id="58571664"/>
<dbReference type="GO" id="GO:0009507">
    <property type="term" value="C:chloroplast"/>
    <property type="evidence" value="ECO:0007669"/>
    <property type="project" value="UniProtKB-SubCell"/>
</dbReference>
<dbReference type="GO" id="GO:0003723">
    <property type="term" value="F:RNA binding"/>
    <property type="evidence" value="ECO:0007669"/>
    <property type="project" value="UniProtKB-KW"/>
</dbReference>
<dbReference type="GO" id="GO:0006397">
    <property type="term" value="P:mRNA processing"/>
    <property type="evidence" value="ECO:0007669"/>
    <property type="project" value="UniProtKB-KW"/>
</dbReference>
<dbReference type="GO" id="GO:0008380">
    <property type="term" value="P:RNA splicing"/>
    <property type="evidence" value="ECO:0007669"/>
    <property type="project" value="UniProtKB-UniRule"/>
</dbReference>
<dbReference type="GO" id="GO:0008033">
    <property type="term" value="P:tRNA processing"/>
    <property type="evidence" value="ECO:0007669"/>
    <property type="project" value="UniProtKB-KW"/>
</dbReference>
<dbReference type="HAMAP" id="MF_01390">
    <property type="entry name" value="MatK"/>
    <property type="match status" value="1"/>
</dbReference>
<dbReference type="InterPro" id="IPR024937">
    <property type="entry name" value="Domain_X"/>
</dbReference>
<dbReference type="InterPro" id="IPR002866">
    <property type="entry name" value="Maturase_MatK"/>
</dbReference>
<dbReference type="InterPro" id="IPR024942">
    <property type="entry name" value="Maturase_MatK_N"/>
</dbReference>
<dbReference type="PANTHER" id="PTHR34811">
    <property type="entry name" value="MATURASE K"/>
    <property type="match status" value="1"/>
</dbReference>
<dbReference type="PANTHER" id="PTHR34811:SF1">
    <property type="entry name" value="MATURASE K"/>
    <property type="match status" value="1"/>
</dbReference>
<dbReference type="Pfam" id="PF01348">
    <property type="entry name" value="Intron_maturas2"/>
    <property type="match status" value="1"/>
</dbReference>
<dbReference type="Pfam" id="PF01824">
    <property type="entry name" value="MatK_N"/>
    <property type="match status" value="1"/>
</dbReference>
<gene>
    <name evidence="1" type="primary">matK</name>
    <name type="synonym">ycf14</name>
</gene>
<protein>
    <recommendedName>
        <fullName evidence="1">Maturase K</fullName>
    </recommendedName>
    <alternativeName>
        <fullName evidence="1">Intron maturase</fullName>
    </alternativeName>
</protein>
<evidence type="ECO:0000255" key="1">
    <source>
        <dbReference type="HAMAP-Rule" id="MF_01390"/>
    </source>
</evidence>
<reference key="1">
    <citation type="journal article" date="1999" name="Theor. Appl. Genet.">
        <title>Species-specific nuclear and chloroplast single nucleotide polymorphisms to distinguish Picea glauca, P. mariana and P. rubens.</title>
        <authorList>
            <person name="Germano J."/>
            <person name="Klein A.S."/>
        </authorList>
        <dbReference type="AGRICOLA" id="IND22025547"/>
    </citation>
    <scope>NUCLEOTIDE SEQUENCE [GENOMIC DNA]</scope>
</reference>
<accession>O63072</accession>